<protein>
    <recommendedName>
        <fullName evidence="1">Elongation factor 4</fullName>
        <shortName evidence="1">EF-4</shortName>
        <ecNumber evidence="1">3.6.5.n1</ecNumber>
    </recommendedName>
    <alternativeName>
        <fullName evidence="1">Ribosomal back-translocase LepA</fullName>
    </alternativeName>
</protein>
<name>LEPA_AQUAE</name>
<reference key="1">
    <citation type="journal article" date="1998" name="Nature">
        <title>The complete genome of the hyperthermophilic bacterium Aquifex aeolicus.</title>
        <authorList>
            <person name="Deckert G."/>
            <person name="Warren P.V."/>
            <person name="Gaasterland T."/>
            <person name="Young W.G."/>
            <person name="Lenox A.L."/>
            <person name="Graham D.E."/>
            <person name="Overbeek R."/>
            <person name="Snead M.A."/>
            <person name="Keller M."/>
            <person name="Aujay M."/>
            <person name="Huber R."/>
            <person name="Feldman R.A."/>
            <person name="Short J.M."/>
            <person name="Olsen G.J."/>
            <person name="Swanson R.V."/>
        </authorList>
    </citation>
    <scope>NUCLEOTIDE SEQUENCE [LARGE SCALE GENOMIC DNA]</scope>
    <source>
        <strain>VF5</strain>
    </source>
</reference>
<reference key="2">
    <citation type="submission" date="2009-02" db="PDB data bank">
        <title>Crystal structures of GTP-binding protein lepA from Aquifex aeolicus.</title>
        <authorList>
            <consortium name="RIKEN structural genomics initiative (RSGI)"/>
        </authorList>
    </citation>
    <scope>X-RAY CRYSTALLOGRAPHY (2.05 ANGSTROMS) IN COMPLEX WITH GTP</scope>
</reference>
<sequence>MEQKNVRNFCIIAHVDHGKSTLADRLLEYTGAISEREKREQLLDTLDVERERGITVKMQAVRMFYKAKDGNTYKLHLIDTPGHVDFSYEVSRALAACEGALLLIDASQGIEAQTVANFWKAVEQDLVIIPVINKIDLPSADVDRVKKQIEEVLGLDPEEAILASAKEGIGIEEILEAIVNRIPPPKGDPQKPLKALIFDSYYDPYRGAVAFVRIFDGEVKPGDKIMLMSTGKEYEVTEVGAQTPKMTKFDKLSAGDVGYIAASIKDVRDIRIGDTITHAKNPTKEPVPGFQPAKPMVYAGIYPAEDTTYEELRDALEKYAINDAAIVYEPESSPALGMGFRVGFLGLLHMEIVQERLEREYGVKIITTAPNVIYRVKKKFTDEVIEVRNPMDFPDNAGLIEYVEEPFVLVTIITPKEYVGPIIQLCQEKRGIQKNMTYLDPNTVYLEYEMPLSEIIVDFHDKIKSISRGFASYDYEFIGYRPSDLIKLTVLINKKPVDALSFIVHADRAQKFARRVAEKLRETIPRQLFEVHIQVAKGGKVIASERIKPLRANVTAKCYGGDVTRKKKLLENQKEGKKRMKQFGKVQLPQEAFLSVLKVE</sequence>
<feature type="chain" id="PRO_0000176223" description="Elongation factor 4">
    <location>
        <begin position="1"/>
        <end position="600"/>
    </location>
</feature>
<feature type="domain" description="tr-type G">
    <location>
        <begin position="4"/>
        <end position="186"/>
    </location>
</feature>
<feature type="binding site" evidence="1 2">
    <location>
        <begin position="16"/>
        <end position="21"/>
    </location>
    <ligand>
        <name>GTP</name>
        <dbReference type="ChEBI" id="CHEBI:37565"/>
    </ligand>
</feature>
<feature type="binding site" evidence="1 2">
    <location>
        <begin position="133"/>
        <end position="136"/>
    </location>
    <ligand>
        <name>GTP</name>
        <dbReference type="ChEBI" id="CHEBI:37565"/>
    </ligand>
</feature>
<feature type="helix" evidence="3">
    <location>
        <begin position="3"/>
        <end position="5"/>
    </location>
</feature>
<feature type="strand" evidence="3">
    <location>
        <begin position="6"/>
        <end position="12"/>
    </location>
</feature>
<feature type="helix" evidence="3">
    <location>
        <begin position="19"/>
        <end position="30"/>
    </location>
</feature>
<feature type="strand" evidence="3">
    <location>
        <begin position="60"/>
        <end position="66"/>
    </location>
</feature>
<feature type="strand" evidence="3">
    <location>
        <begin position="72"/>
        <end position="78"/>
    </location>
</feature>
<feature type="helix" evidence="3">
    <location>
        <begin position="84"/>
        <end position="86"/>
    </location>
</feature>
<feature type="helix" evidence="3">
    <location>
        <begin position="87"/>
        <end position="95"/>
    </location>
</feature>
<feature type="strand" evidence="3">
    <location>
        <begin position="98"/>
        <end position="105"/>
    </location>
</feature>
<feature type="turn" evidence="3">
    <location>
        <begin position="106"/>
        <end position="108"/>
    </location>
</feature>
<feature type="helix" evidence="3">
    <location>
        <begin position="112"/>
        <end position="123"/>
    </location>
</feature>
<feature type="strand" evidence="3">
    <location>
        <begin position="127"/>
        <end position="133"/>
    </location>
</feature>
<feature type="strand" evidence="5">
    <location>
        <begin position="137"/>
        <end position="139"/>
    </location>
</feature>
<feature type="helix" evidence="3">
    <location>
        <begin position="142"/>
        <end position="151"/>
    </location>
</feature>
<feature type="helix" evidence="3">
    <location>
        <begin position="157"/>
        <end position="159"/>
    </location>
</feature>
<feature type="strand" evidence="5">
    <location>
        <begin position="161"/>
        <end position="164"/>
    </location>
</feature>
<feature type="turn" evidence="3">
    <location>
        <begin position="165"/>
        <end position="168"/>
    </location>
</feature>
<feature type="helix" evidence="3">
    <location>
        <begin position="171"/>
        <end position="181"/>
    </location>
</feature>
<feature type="strand" evidence="3">
    <location>
        <begin position="194"/>
        <end position="203"/>
    </location>
</feature>
<feature type="turn" evidence="3">
    <location>
        <begin position="204"/>
        <end position="206"/>
    </location>
</feature>
<feature type="strand" evidence="3">
    <location>
        <begin position="207"/>
        <end position="219"/>
    </location>
</feature>
<feature type="strand" evidence="3">
    <location>
        <begin position="224"/>
        <end position="227"/>
    </location>
</feature>
<feature type="turn" evidence="3">
    <location>
        <begin position="228"/>
        <end position="230"/>
    </location>
</feature>
<feature type="strand" evidence="3">
    <location>
        <begin position="233"/>
        <end position="235"/>
    </location>
</feature>
<feature type="strand" evidence="3">
    <location>
        <begin position="238"/>
        <end position="250"/>
    </location>
</feature>
<feature type="strand" evidence="3">
    <location>
        <begin position="257"/>
        <end position="263"/>
    </location>
</feature>
<feature type="helix" evidence="4">
    <location>
        <begin position="267"/>
        <end position="269"/>
    </location>
</feature>
<feature type="strand" evidence="3">
    <location>
        <begin position="275"/>
        <end position="281"/>
    </location>
</feature>
<feature type="strand" evidence="3">
    <location>
        <begin position="297"/>
        <end position="303"/>
    </location>
</feature>
<feature type="helix" evidence="3">
    <location>
        <begin position="309"/>
        <end position="320"/>
    </location>
</feature>
<feature type="strand" evidence="3">
    <location>
        <begin position="327"/>
        <end position="333"/>
    </location>
</feature>
<feature type="turn" evidence="3">
    <location>
        <begin position="334"/>
        <end position="336"/>
    </location>
</feature>
<feature type="strand" evidence="3">
    <location>
        <begin position="337"/>
        <end position="346"/>
    </location>
</feature>
<feature type="helix" evidence="3">
    <location>
        <begin position="347"/>
        <end position="361"/>
    </location>
</feature>
<feature type="strand" evidence="3">
    <location>
        <begin position="365"/>
        <end position="367"/>
    </location>
</feature>
<feature type="strand" evidence="3">
    <location>
        <begin position="374"/>
        <end position="378"/>
    </location>
</feature>
<feature type="strand" evidence="3">
    <location>
        <begin position="385"/>
        <end position="389"/>
    </location>
</feature>
<feature type="helix" evidence="3">
    <location>
        <begin position="390"/>
        <end position="392"/>
    </location>
</feature>
<feature type="helix" evidence="3">
    <location>
        <begin position="397"/>
        <end position="399"/>
    </location>
</feature>
<feature type="strand" evidence="3">
    <location>
        <begin position="400"/>
        <end position="415"/>
    </location>
</feature>
<feature type="helix" evidence="3">
    <location>
        <begin position="416"/>
        <end position="418"/>
    </location>
</feature>
<feature type="helix" evidence="3">
    <location>
        <begin position="419"/>
        <end position="428"/>
    </location>
</feature>
<feature type="strand" evidence="3">
    <location>
        <begin position="432"/>
        <end position="440"/>
    </location>
</feature>
<feature type="strand" evidence="3">
    <location>
        <begin position="443"/>
        <end position="451"/>
    </location>
</feature>
<feature type="helix" evidence="3">
    <location>
        <begin position="452"/>
        <end position="466"/>
    </location>
</feature>
<feature type="turn" evidence="3">
    <location>
        <begin position="467"/>
        <end position="469"/>
    </location>
</feature>
<feature type="strand" evidence="3">
    <location>
        <begin position="472"/>
        <end position="482"/>
    </location>
</feature>
<feature type="strand" evidence="3">
    <location>
        <begin position="485"/>
        <end position="496"/>
    </location>
</feature>
<feature type="helix" evidence="3">
    <location>
        <begin position="498"/>
        <end position="500"/>
    </location>
</feature>
<feature type="strand" evidence="3">
    <location>
        <begin position="502"/>
        <end position="505"/>
    </location>
</feature>
<feature type="helix" evidence="3">
    <location>
        <begin position="506"/>
        <end position="508"/>
    </location>
</feature>
<feature type="helix" evidence="3">
    <location>
        <begin position="509"/>
        <end position="523"/>
    </location>
</feature>
<feature type="strand" evidence="3">
    <location>
        <begin position="531"/>
        <end position="537"/>
    </location>
</feature>
<feature type="strand" evidence="3">
    <location>
        <begin position="540"/>
        <end position="547"/>
    </location>
</feature>
<accession>O67618</accession>
<organism>
    <name type="scientific">Aquifex aeolicus (strain VF5)</name>
    <dbReference type="NCBI Taxonomy" id="224324"/>
    <lineage>
        <taxon>Bacteria</taxon>
        <taxon>Pseudomonadati</taxon>
        <taxon>Aquificota</taxon>
        <taxon>Aquificia</taxon>
        <taxon>Aquificales</taxon>
        <taxon>Aquificaceae</taxon>
        <taxon>Aquifex</taxon>
    </lineage>
</organism>
<keyword id="KW-0002">3D-structure</keyword>
<keyword id="KW-0997">Cell inner membrane</keyword>
<keyword id="KW-1003">Cell membrane</keyword>
<keyword id="KW-0342">GTP-binding</keyword>
<keyword id="KW-0378">Hydrolase</keyword>
<keyword id="KW-0472">Membrane</keyword>
<keyword id="KW-0547">Nucleotide-binding</keyword>
<keyword id="KW-0648">Protein biosynthesis</keyword>
<keyword id="KW-1185">Reference proteome</keyword>
<gene>
    <name evidence="1" type="primary">lepA</name>
    <name type="ordered locus">aq_1725</name>
</gene>
<dbReference type="EC" id="3.6.5.n1" evidence="1"/>
<dbReference type="EMBL" id="AE000657">
    <property type="protein sequence ID" value="AAC07583.1"/>
    <property type="molecule type" value="Genomic_DNA"/>
</dbReference>
<dbReference type="PIR" id="H70448">
    <property type="entry name" value="H70448"/>
</dbReference>
<dbReference type="RefSeq" id="NP_214184.1">
    <property type="nucleotide sequence ID" value="NC_000918.1"/>
</dbReference>
<dbReference type="RefSeq" id="WP_010881121.1">
    <property type="nucleotide sequence ID" value="NC_000918.1"/>
</dbReference>
<dbReference type="PDB" id="2YWE">
    <property type="method" value="X-ray"/>
    <property type="resolution" value="2.05 A"/>
    <property type="chains" value="A=1-600"/>
</dbReference>
<dbReference type="PDB" id="2YWF">
    <property type="method" value="X-ray"/>
    <property type="resolution" value="2.24 A"/>
    <property type="chains" value="A=1-600"/>
</dbReference>
<dbReference type="PDB" id="2YWG">
    <property type="method" value="X-ray"/>
    <property type="resolution" value="2.94 A"/>
    <property type="chains" value="A=1-600"/>
</dbReference>
<dbReference type="PDB" id="2YWH">
    <property type="method" value="X-ray"/>
    <property type="resolution" value="2.24 A"/>
    <property type="chains" value="A=1-600"/>
</dbReference>
<dbReference type="PDBsum" id="2YWE"/>
<dbReference type="PDBsum" id="2YWF"/>
<dbReference type="PDBsum" id="2YWG"/>
<dbReference type="PDBsum" id="2YWH"/>
<dbReference type="SMR" id="O67618"/>
<dbReference type="FunCoup" id="O67618">
    <property type="interactions" value="462"/>
</dbReference>
<dbReference type="STRING" id="224324.aq_1725"/>
<dbReference type="EnsemblBacteria" id="AAC07583">
    <property type="protein sequence ID" value="AAC07583"/>
    <property type="gene ID" value="aq_1725"/>
</dbReference>
<dbReference type="KEGG" id="aae:aq_1725"/>
<dbReference type="PATRIC" id="fig|224324.8.peg.1326"/>
<dbReference type="eggNOG" id="COG0481">
    <property type="taxonomic scope" value="Bacteria"/>
</dbReference>
<dbReference type="HOGENOM" id="CLU_009995_3_3_0"/>
<dbReference type="InParanoid" id="O67618"/>
<dbReference type="OrthoDB" id="9804431at2"/>
<dbReference type="EvolutionaryTrace" id="O67618"/>
<dbReference type="Proteomes" id="UP000000798">
    <property type="component" value="Chromosome"/>
</dbReference>
<dbReference type="GO" id="GO:0005886">
    <property type="term" value="C:plasma membrane"/>
    <property type="evidence" value="ECO:0007669"/>
    <property type="project" value="UniProtKB-SubCell"/>
</dbReference>
<dbReference type="GO" id="GO:0005525">
    <property type="term" value="F:GTP binding"/>
    <property type="evidence" value="ECO:0007669"/>
    <property type="project" value="UniProtKB-UniRule"/>
</dbReference>
<dbReference type="GO" id="GO:0003924">
    <property type="term" value="F:GTPase activity"/>
    <property type="evidence" value="ECO:0007669"/>
    <property type="project" value="UniProtKB-UniRule"/>
</dbReference>
<dbReference type="GO" id="GO:0043022">
    <property type="term" value="F:ribosome binding"/>
    <property type="evidence" value="ECO:0000318"/>
    <property type="project" value="GO_Central"/>
</dbReference>
<dbReference type="GO" id="GO:0003746">
    <property type="term" value="F:translation elongation factor activity"/>
    <property type="evidence" value="ECO:0007669"/>
    <property type="project" value="UniProtKB-UniRule"/>
</dbReference>
<dbReference type="GO" id="GO:0045727">
    <property type="term" value="P:positive regulation of translation"/>
    <property type="evidence" value="ECO:0000318"/>
    <property type="project" value="GO_Central"/>
</dbReference>
<dbReference type="CDD" id="cd03699">
    <property type="entry name" value="EF4_II"/>
    <property type="match status" value="1"/>
</dbReference>
<dbReference type="CDD" id="cd16260">
    <property type="entry name" value="EF4_III"/>
    <property type="match status" value="1"/>
</dbReference>
<dbReference type="CDD" id="cd01890">
    <property type="entry name" value="LepA"/>
    <property type="match status" value="1"/>
</dbReference>
<dbReference type="CDD" id="cd03709">
    <property type="entry name" value="lepA_C"/>
    <property type="match status" value="1"/>
</dbReference>
<dbReference type="FunFam" id="3.40.50.300:FF:000078">
    <property type="entry name" value="Elongation factor 4"/>
    <property type="match status" value="1"/>
</dbReference>
<dbReference type="FunFam" id="2.40.30.10:FF:000015">
    <property type="entry name" value="Translation factor GUF1, mitochondrial"/>
    <property type="match status" value="1"/>
</dbReference>
<dbReference type="FunFam" id="3.30.70.240:FF:000007">
    <property type="entry name" value="Translation factor GUF1, mitochondrial"/>
    <property type="match status" value="1"/>
</dbReference>
<dbReference type="FunFam" id="3.30.70.2570:FF:000001">
    <property type="entry name" value="Translation factor GUF1, mitochondrial"/>
    <property type="match status" value="1"/>
</dbReference>
<dbReference type="FunFam" id="3.30.70.870:FF:000004">
    <property type="entry name" value="Translation factor GUF1, mitochondrial"/>
    <property type="match status" value="1"/>
</dbReference>
<dbReference type="Gene3D" id="3.30.70.240">
    <property type="match status" value="1"/>
</dbReference>
<dbReference type="Gene3D" id="3.30.70.2570">
    <property type="entry name" value="Elongation factor 4, C-terminal domain"/>
    <property type="match status" value="1"/>
</dbReference>
<dbReference type="Gene3D" id="3.30.70.870">
    <property type="entry name" value="Elongation Factor G (Translational Gtpase), domain 3"/>
    <property type="match status" value="1"/>
</dbReference>
<dbReference type="Gene3D" id="3.40.50.300">
    <property type="entry name" value="P-loop containing nucleotide triphosphate hydrolases"/>
    <property type="match status" value="1"/>
</dbReference>
<dbReference type="Gene3D" id="2.40.30.10">
    <property type="entry name" value="Translation factors"/>
    <property type="match status" value="1"/>
</dbReference>
<dbReference type="HAMAP" id="MF_00071">
    <property type="entry name" value="LepA"/>
    <property type="match status" value="1"/>
</dbReference>
<dbReference type="InterPro" id="IPR006297">
    <property type="entry name" value="EF-4"/>
</dbReference>
<dbReference type="InterPro" id="IPR035647">
    <property type="entry name" value="EFG_III/V"/>
</dbReference>
<dbReference type="InterPro" id="IPR000640">
    <property type="entry name" value="EFG_V-like"/>
</dbReference>
<dbReference type="InterPro" id="IPR004161">
    <property type="entry name" value="EFTu-like_2"/>
</dbReference>
<dbReference type="InterPro" id="IPR031157">
    <property type="entry name" value="G_TR_CS"/>
</dbReference>
<dbReference type="InterPro" id="IPR038363">
    <property type="entry name" value="LepA_C_sf"/>
</dbReference>
<dbReference type="InterPro" id="IPR013842">
    <property type="entry name" value="LepA_CTD"/>
</dbReference>
<dbReference type="InterPro" id="IPR035654">
    <property type="entry name" value="LepA_IV"/>
</dbReference>
<dbReference type="InterPro" id="IPR027417">
    <property type="entry name" value="P-loop_NTPase"/>
</dbReference>
<dbReference type="InterPro" id="IPR005225">
    <property type="entry name" value="Small_GTP-bd"/>
</dbReference>
<dbReference type="InterPro" id="IPR000795">
    <property type="entry name" value="T_Tr_GTP-bd_dom"/>
</dbReference>
<dbReference type="InterPro" id="IPR009000">
    <property type="entry name" value="Transl_B-barrel_sf"/>
</dbReference>
<dbReference type="NCBIfam" id="TIGR01393">
    <property type="entry name" value="lepA"/>
    <property type="match status" value="1"/>
</dbReference>
<dbReference type="NCBIfam" id="TIGR00231">
    <property type="entry name" value="small_GTP"/>
    <property type="match status" value="1"/>
</dbReference>
<dbReference type="PANTHER" id="PTHR43512:SF4">
    <property type="entry name" value="TRANSLATION FACTOR GUF1 HOMOLOG, CHLOROPLASTIC"/>
    <property type="match status" value="1"/>
</dbReference>
<dbReference type="PANTHER" id="PTHR43512">
    <property type="entry name" value="TRANSLATION FACTOR GUF1-RELATED"/>
    <property type="match status" value="1"/>
</dbReference>
<dbReference type="Pfam" id="PF00679">
    <property type="entry name" value="EFG_C"/>
    <property type="match status" value="1"/>
</dbReference>
<dbReference type="Pfam" id="PF00009">
    <property type="entry name" value="GTP_EFTU"/>
    <property type="match status" value="1"/>
</dbReference>
<dbReference type="Pfam" id="PF03144">
    <property type="entry name" value="GTP_EFTU_D2"/>
    <property type="match status" value="1"/>
</dbReference>
<dbReference type="Pfam" id="PF06421">
    <property type="entry name" value="LepA_C"/>
    <property type="match status" value="1"/>
</dbReference>
<dbReference type="PRINTS" id="PR00315">
    <property type="entry name" value="ELONGATNFCT"/>
</dbReference>
<dbReference type="SMART" id="SM00838">
    <property type="entry name" value="EFG_C"/>
    <property type="match status" value="1"/>
</dbReference>
<dbReference type="SUPFAM" id="SSF54980">
    <property type="entry name" value="EF-G C-terminal domain-like"/>
    <property type="match status" value="2"/>
</dbReference>
<dbReference type="SUPFAM" id="SSF52540">
    <property type="entry name" value="P-loop containing nucleoside triphosphate hydrolases"/>
    <property type="match status" value="1"/>
</dbReference>
<dbReference type="SUPFAM" id="SSF50447">
    <property type="entry name" value="Translation proteins"/>
    <property type="match status" value="1"/>
</dbReference>
<dbReference type="PROSITE" id="PS00301">
    <property type="entry name" value="G_TR_1"/>
    <property type="match status" value="1"/>
</dbReference>
<dbReference type="PROSITE" id="PS51722">
    <property type="entry name" value="G_TR_2"/>
    <property type="match status" value="1"/>
</dbReference>
<comment type="function">
    <text evidence="1">Required for accurate and efficient protein synthesis under certain stress conditions. May act as a fidelity factor of the translation reaction, by catalyzing a one-codon backward translocation of tRNAs on improperly translocated ribosomes. Back-translocation proceeds from a post-translocation (POST) complex to a pre-translocation (PRE) complex, thus giving elongation factor G a second chance to translocate the tRNAs correctly. Binds to ribosomes in a GTP-dependent manner.</text>
</comment>
<comment type="catalytic activity">
    <reaction evidence="1">
        <text>GTP + H2O = GDP + phosphate + H(+)</text>
        <dbReference type="Rhea" id="RHEA:19669"/>
        <dbReference type="ChEBI" id="CHEBI:15377"/>
        <dbReference type="ChEBI" id="CHEBI:15378"/>
        <dbReference type="ChEBI" id="CHEBI:37565"/>
        <dbReference type="ChEBI" id="CHEBI:43474"/>
        <dbReference type="ChEBI" id="CHEBI:58189"/>
        <dbReference type="EC" id="3.6.5.n1"/>
    </reaction>
</comment>
<comment type="subcellular location">
    <subcellularLocation>
        <location evidence="1">Cell inner membrane</location>
        <topology evidence="1">Peripheral membrane protein</topology>
        <orientation evidence="1">Cytoplasmic side</orientation>
    </subcellularLocation>
</comment>
<comment type="similarity">
    <text evidence="1">Belongs to the TRAFAC class translation factor GTPase superfamily. Classic translation factor GTPase family. LepA subfamily.</text>
</comment>
<evidence type="ECO:0000255" key="1">
    <source>
        <dbReference type="HAMAP-Rule" id="MF_00071"/>
    </source>
</evidence>
<evidence type="ECO:0000269" key="2">
    <source ref="2"/>
</evidence>
<evidence type="ECO:0007829" key="3">
    <source>
        <dbReference type="PDB" id="2YWE"/>
    </source>
</evidence>
<evidence type="ECO:0007829" key="4">
    <source>
        <dbReference type="PDB" id="2YWF"/>
    </source>
</evidence>
<evidence type="ECO:0007829" key="5">
    <source>
        <dbReference type="PDB" id="2YWG"/>
    </source>
</evidence>
<proteinExistence type="evidence at protein level"/>